<sequence>MKLNELKPNEGSRRNRKRVGRGTSSGYGKTAGRGQKGQLARTGGKTRLGFEGGQMPLFRRMPKRGFKNVNRKEYAIINLNDLNRFDDGSEVTIDTLKSSGLVKKELAGVKLLANGELKVKLTVKVNKASEAAKKAVEAAGGTVEVI</sequence>
<comment type="function">
    <text evidence="1">Binds to the 23S rRNA.</text>
</comment>
<comment type="subunit">
    <text evidence="1">Part of the 50S ribosomal subunit.</text>
</comment>
<comment type="similarity">
    <text evidence="1">Belongs to the universal ribosomal protein uL15 family.</text>
</comment>
<name>RL15_LACJO</name>
<gene>
    <name evidence="1" type="primary">rplO</name>
    <name type="ordered locus">LJ_0355</name>
</gene>
<feature type="chain" id="PRO_0000104736" description="Large ribosomal subunit protein uL15">
    <location>
        <begin position="1"/>
        <end position="146"/>
    </location>
</feature>
<feature type="region of interest" description="Disordered" evidence="2">
    <location>
        <begin position="1"/>
        <end position="54"/>
    </location>
</feature>
<feature type="compositionally biased region" description="Basic and acidic residues" evidence="2">
    <location>
        <begin position="1"/>
        <end position="13"/>
    </location>
</feature>
<feature type="compositionally biased region" description="Gly residues" evidence="2">
    <location>
        <begin position="23"/>
        <end position="35"/>
    </location>
</feature>
<evidence type="ECO:0000255" key="1">
    <source>
        <dbReference type="HAMAP-Rule" id="MF_01341"/>
    </source>
</evidence>
<evidence type="ECO:0000256" key="2">
    <source>
        <dbReference type="SAM" id="MobiDB-lite"/>
    </source>
</evidence>
<evidence type="ECO:0000305" key="3"/>
<accession>Q74L71</accession>
<dbReference type="EMBL" id="AE017198">
    <property type="protein sequence ID" value="AAS08344.1"/>
    <property type="molecule type" value="Genomic_DNA"/>
</dbReference>
<dbReference type="RefSeq" id="WP_003649460.1">
    <property type="nucleotide sequence ID" value="NC_005362.1"/>
</dbReference>
<dbReference type="SMR" id="Q74L71"/>
<dbReference type="GeneID" id="83569773"/>
<dbReference type="KEGG" id="ljo:LJ_0355"/>
<dbReference type="eggNOG" id="COG0200">
    <property type="taxonomic scope" value="Bacteria"/>
</dbReference>
<dbReference type="HOGENOM" id="CLU_055188_4_2_9"/>
<dbReference type="Proteomes" id="UP000000581">
    <property type="component" value="Chromosome"/>
</dbReference>
<dbReference type="GO" id="GO:0022625">
    <property type="term" value="C:cytosolic large ribosomal subunit"/>
    <property type="evidence" value="ECO:0007669"/>
    <property type="project" value="TreeGrafter"/>
</dbReference>
<dbReference type="GO" id="GO:0019843">
    <property type="term" value="F:rRNA binding"/>
    <property type="evidence" value="ECO:0007669"/>
    <property type="project" value="UniProtKB-UniRule"/>
</dbReference>
<dbReference type="GO" id="GO:0003735">
    <property type="term" value="F:structural constituent of ribosome"/>
    <property type="evidence" value="ECO:0007669"/>
    <property type="project" value="InterPro"/>
</dbReference>
<dbReference type="GO" id="GO:0006412">
    <property type="term" value="P:translation"/>
    <property type="evidence" value="ECO:0007669"/>
    <property type="project" value="UniProtKB-UniRule"/>
</dbReference>
<dbReference type="Gene3D" id="3.100.10.10">
    <property type="match status" value="1"/>
</dbReference>
<dbReference type="HAMAP" id="MF_01341">
    <property type="entry name" value="Ribosomal_uL15"/>
    <property type="match status" value="1"/>
</dbReference>
<dbReference type="InterPro" id="IPR030878">
    <property type="entry name" value="Ribosomal_uL15"/>
</dbReference>
<dbReference type="InterPro" id="IPR021131">
    <property type="entry name" value="Ribosomal_uL15/eL18"/>
</dbReference>
<dbReference type="InterPro" id="IPR036227">
    <property type="entry name" value="Ribosomal_uL15/eL18_sf"/>
</dbReference>
<dbReference type="InterPro" id="IPR005749">
    <property type="entry name" value="Ribosomal_uL15_bac-type"/>
</dbReference>
<dbReference type="InterPro" id="IPR001196">
    <property type="entry name" value="Ribosomal_uL15_CS"/>
</dbReference>
<dbReference type="NCBIfam" id="TIGR01071">
    <property type="entry name" value="rplO_bact"/>
    <property type="match status" value="1"/>
</dbReference>
<dbReference type="PANTHER" id="PTHR12934">
    <property type="entry name" value="50S RIBOSOMAL PROTEIN L15"/>
    <property type="match status" value="1"/>
</dbReference>
<dbReference type="PANTHER" id="PTHR12934:SF11">
    <property type="entry name" value="LARGE RIBOSOMAL SUBUNIT PROTEIN UL15M"/>
    <property type="match status" value="1"/>
</dbReference>
<dbReference type="Pfam" id="PF00828">
    <property type="entry name" value="Ribosomal_L27A"/>
    <property type="match status" value="1"/>
</dbReference>
<dbReference type="SUPFAM" id="SSF52080">
    <property type="entry name" value="Ribosomal proteins L15p and L18e"/>
    <property type="match status" value="1"/>
</dbReference>
<dbReference type="PROSITE" id="PS00475">
    <property type="entry name" value="RIBOSOMAL_L15"/>
    <property type="match status" value="1"/>
</dbReference>
<organism>
    <name type="scientific">Lactobacillus johnsonii (strain CNCM I-12250 / La1 / NCC 533)</name>
    <dbReference type="NCBI Taxonomy" id="257314"/>
    <lineage>
        <taxon>Bacteria</taxon>
        <taxon>Bacillati</taxon>
        <taxon>Bacillota</taxon>
        <taxon>Bacilli</taxon>
        <taxon>Lactobacillales</taxon>
        <taxon>Lactobacillaceae</taxon>
        <taxon>Lactobacillus</taxon>
    </lineage>
</organism>
<protein>
    <recommendedName>
        <fullName evidence="1">Large ribosomal subunit protein uL15</fullName>
    </recommendedName>
    <alternativeName>
        <fullName evidence="3">50S ribosomal protein L15</fullName>
    </alternativeName>
</protein>
<proteinExistence type="inferred from homology"/>
<reference key="1">
    <citation type="journal article" date="2004" name="Proc. Natl. Acad. Sci. U.S.A.">
        <title>The genome sequence of the probiotic intestinal bacterium Lactobacillus johnsonii NCC 533.</title>
        <authorList>
            <person name="Pridmore R.D."/>
            <person name="Berger B."/>
            <person name="Desiere F."/>
            <person name="Vilanova D."/>
            <person name="Barretto C."/>
            <person name="Pittet A.-C."/>
            <person name="Zwahlen M.-C."/>
            <person name="Rouvet M."/>
            <person name="Altermann E."/>
            <person name="Barrangou R."/>
            <person name="Mollet B."/>
            <person name="Mercenier A."/>
            <person name="Klaenhammer T."/>
            <person name="Arigoni F."/>
            <person name="Schell M.A."/>
        </authorList>
    </citation>
    <scope>NUCLEOTIDE SEQUENCE [LARGE SCALE GENOMIC DNA]</scope>
    <source>
        <strain>CNCM I-1225 / La1 / NCC 533</strain>
    </source>
</reference>
<keyword id="KW-0687">Ribonucleoprotein</keyword>
<keyword id="KW-0689">Ribosomal protein</keyword>
<keyword id="KW-0694">RNA-binding</keyword>
<keyword id="KW-0699">rRNA-binding</keyword>